<keyword id="KW-0148">Chlorophyll</keyword>
<keyword id="KW-0150">Chloroplast</keyword>
<keyword id="KW-0157">Chromophore</keyword>
<keyword id="KW-0460">Magnesium</keyword>
<keyword id="KW-0472">Membrane</keyword>
<keyword id="KW-0479">Metal-binding</keyword>
<keyword id="KW-0597">Phosphoprotein</keyword>
<keyword id="KW-0602">Photosynthesis</keyword>
<keyword id="KW-0603">Photosystem I</keyword>
<keyword id="KW-0604">Photosystem II</keyword>
<keyword id="KW-0934">Plastid</keyword>
<keyword id="KW-0793">Thylakoid</keyword>
<keyword id="KW-0812">Transmembrane</keyword>
<keyword id="KW-1133">Transmembrane helix</keyword>
<dbReference type="EMBL" id="X06602">
    <property type="protein sequence ID" value="CAA29821.1"/>
    <property type="molecule type" value="mRNA"/>
</dbReference>
<dbReference type="PIR" id="S00653">
    <property type="entry name" value="S00653"/>
</dbReference>
<dbReference type="SMR" id="P12327"/>
<dbReference type="GO" id="GO:0009535">
    <property type="term" value="C:chloroplast thylakoid membrane"/>
    <property type="evidence" value="ECO:0007669"/>
    <property type="project" value="UniProtKB-SubCell"/>
</dbReference>
<dbReference type="GO" id="GO:0009522">
    <property type="term" value="C:photosystem I"/>
    <property type="evidence" value="ECO:0007669"/>
    <property type="project" value="UniProtKB-KW"/>
</dbReference>
<dbReference type="GO" id="GO:0009523">
    <property type="term" value="C:photosystem II"/>
    <property type="evidence" value="ECO:0007669"/>
    <property type="project" value="UniProtKB-KW"/>
</dbReference>
<dbReference type="GO" id="GO:0016168">
    <property type="term" value="F:chlorophyll binding"/>
    <property type="evidence" value="ECO:0007669"/>
    <property type="project" value="UniProtKB-KW"/>
</dbReference>
<dbReference type="GO" id="GO:0046872">
    <property type="term" value="F:metal ion binding"/>
    <property type="evidence" value="ECO:0007669"/>
    <property type="project" value="UniProtKB-KW"/>
</dbReference>
<dbReference type="GO" id="GO:0009765">
    <property type="term" value="P:photosynthesis, light harvesting"/>
    <property type="evidence" value="ECO:0007669"/>
    <property type="project" value="InterPro"/>
</dbReference>
<dbReference type="Gene3D" id="1.10.3460.10">
    <property type="entry name" value="Chlorophyll a/b binding protein domain"/>
    <property type="match status" value="1"/>
</dbReference>
<dbReference type="InterPro" id="IPR001344">
    <property type="entry name" value="Chloro_AB-bd_pln"/>
</dbReference>
<dbReference type="InterPro" id="IPR022796">
    <property type="entry name" value="Chloroa_b-bind"/>
</dbReference>
<dbReference type="PANTHER" id="PTHR21649">
    <property type="entry name" value="CHLOROPHYLL A/B BINDING PROTEIN"/>
    <property type="match status" value="1"/>
</dbReference>
<dbReference type="Pfam" id="PF00504">
    <property type="entry name" value="Chloroa_b-bind"/>
    <property type="match status" value="1"/>
</dbReference>
<dbReference type="SUPFAM" id="SSF103511">
    <property type="entry name" value="Chlorophyll a-b binding protein"/>
    <property type="match status" value="1"/>
</dbReference>
<name>CB21_EUGGR</name>
<reference key="1">
    <citation type="journal article" date="1987" name="Curr. Genet.">
        <title>Molecular analysis of the transcripts encoding the light-harvesting chlorophyll a/b protein in Euglena gracilis: unusual size of the mRNA.</title>
        <authorList>
            <person name="Houlne G."/>
            <person name="Schantz R."/>
        </authorList>
    </citation>
    <scope>NUCLEOTIDE SEQUENCE [MRNA]</scope>
    <source>
        <strain>Z / UTEX 753</strain>
    </source>
</reference>
<feature type="chain" id="PRO_0000165472" description="Chlorophyll a-b binding protein of LHCII type 1">
    <location>
        <begin position="1" status="less than"/>
        <end position="127"/>
    </location>
</feature>
<feature type="transmembrane region" description="Helical" evidence="3">
    <location>
        <begin position="11"/>
        <end position="28"/>
    </location>
</feature>
<feature type="transmembrane region" description="Helical" evidence="3">
    <location>
        <begin position="76"/>
        <end position="92"/>
    </location>
</feature>
<feature type="binding site" evidence="1">
    <location>
        <position position="5"/>
    </location>
    <ligand>
        <name>chlorophyll a</name>
        <dbReference type="ChEBI" id="CHEBI:58416"/>
        <label>3</label>
    </ligand>
</feature>
<feature type="binding site" description="axial binding residue" evidence="1">
    <location>
        <position position="6"/>
    </location>
    <ligand>
        <name>chlorophyll b</name>
        <dbReference type="ChEBI" id="CHEBI:61721"/>
        <label>2</label>
    </ligand>
    <ligandPart>
        <name>Mg</name>
        <dbReference type="ChEBI" id="CHEBI:25107"/>
    </ligandPart>
</feature>
<feature type="binding site" evidence="1">
    <location>
        <position position="10"/>
    </location>
    <ligand>
        <name>chlorophyll b</name>
        <dbReference type="ChEBI" id="CHEBI:61721"/>
        <label>3</label>
    </ligand>
</feature>
<feature type="binding site" evidence="1">
    <location>
        <position position="18"/>
    </location>
    <ligand>
        <name>chlorophyll b</name>
        <dbReference type="ChEBI" id="CHEBI:61721"/>
        <label>4</label>
    </ligand>
</feature>
<feature type="binding site" evidence="2">
    <location>
        <position position="18"/>
    </location>
    <ligand>
        <name>chlorophyll b</name>
        <dbReference type="ChEBI" id="CHEBI:61721"/>
        <label>5</label>
    </ligand>
</feature>
<feature type="binding site" description="axial binding residue" evidence="1">
    <location>
        <position position="26"/>
    </location>
    <ligand>
        <name>chlorophyll b</name>
        <dbReference type="ChEBI" id="CHEBI:61721"/>
        <label>3</label>
    </ligand>
    <ligandPart>
        <name>Mg</name>
        <dbReference type="ChEBI" id="CHEBI:25107"/>
    </ligandPart>
</feature>
<feature type="binding site" evidence="1">
    <location>
        <position position="29"/>
    </location>
    <ligand>
        <name>chlorophyll b</name>
        <dbReference type="ChEBI" id="CHEBI:61721"/>
        <label>4</label>
    </ligand>
</feature>
<feature type="binding site" evidence="1">
    <location>
        <position position="69"/>
    </location>
    <ligand>
        <name>chlorophyll a</name>
        <dbReference type="ChEBI" id="CHEBI:58416"/>
        <label>5</label>
    </ligand>
</feature>
<feature type="binding site" description="axial binding residue" evidence="1">
    <location>
        <position position="70"/>
    </location>
    <ligand>
        <name>chlorophyll a</name>
        <dbReference type="ChEBI" id="CHEBI:58416"/>
        <label>3</label>
    </ligand>
    <ligandPart>
        <name>Mg</name>
        <dbReference type="ChEBI" id="CHEBI:25107"/>
    </ligandPart>
</feature>
<feature type="binding site" description="axial binding residue" evidence="1">
    <location>
        <position position="73"/>
    </location>
    <ligand>
        <name>chlorophyll a</name>
        <dbReference type="ChEBI" id="CHEBI:58416"/>
        <label>4</label>
    </ligand>
    <ligandPart>
        <name>Mg</name>
        <dbReference type="ChEBI" id="CHEBI:25107"/>
    </ligandPart>
</feature>
<feature type="binding site" description="axial binding residue" evidence="1">
    <location>
        <position position="87"/>
    </location>
    <ligand>
        <name>chlorophyll a</name>
        <dbReference type="ChEBI" id="CHEBI:58416"/>
        <label>5</label>
    </ligand>
    <ligandPart>
        <name>Mg</name>
        <dbReference type="ChEBI" id="CHEBI:25107"/>
    </ligandPart>
</feature>
<feature type="binding site" description="axial binding residue" evidence="1">
    <location>
        <position position="102"/>
    </location>
    <ligand>
        <name>chlorophyll a</name>
        <dbReference type="ChEBI" id="CHEBI:58416"/>
        <label>6</label>
    </ligand>
    <ligandPart>
        <name>Mg</name>
        <dbReference type="ChEBI" id="CHEBI:25107"/>
    </ligandPart>
</feature>
<feature type="binding site" evidence="1">
    <location>
        <position position="119"/>
    </location>
    <ligand>
        <name>chlorophyll b</name>
        <dbReference type="ChEBI" id="CHEBI:61721"/>
        <label>5</label>
    </ligand>
</feature>
<feature type="non-terminal residue">
    <location>
        <position position="1"/>
    </location>
</feature>
<proteinExistence type="evidence at transcript level"/>
<protein>
    <recommendedName>
        <fullName>Chlorophyll a-b binding protein of LHCII type 1</fullName>
    </recommendedName>
    <alternativeName>
        <fullName>Chlorophyll a-b binding protein of LHCII type I</fullName>
        <shortName>CAB</shortName>
        <shortName>LHCP</shortName>
    </alternativeName>
</protein>
<sequence>VVQALIHAKSLLAILATQVLLMGAVEGYRAGNTAPGQFGEDLDRLYPGGPFDPLGLADDPDTFPELKVKEIKNGRLAMSGMLGFYAQAIVTGEGPVENWLYHLQDPSAHNGLTALVTQFAPTPVALL</sequence>
<organism>
    <name type="scientific">Euglena gracilis</name>
    <dbReference type="NCBI Taxonomy" id="3039"/>
    <lineage>
        <taxon>Eukaryota</taxon>
        <taxon>Discoba</taxon>
        <taxon>Euglenozoa</taxon>
        <taxon>Euglenida</taxon>
        <taxon>Spirocuta</taxon>
        <taxon>Euglenophyceae</taxon>
        <taxon>Euglenales</taxon>
        <taxon>Euglenaceae</taxon>
        <taxon>Euglena</taxon>
    </lineage>
</organism>
<evidence type="ECO:0000250" key="1"/>
<evidence type="ECO:0000250" key="2">
    <source>
        <dbReference type="UniProtKB" id="P07371"/>
    </source>
</evidence>
<evidence type="ECO:0000255" key="3"/>
<evidence type="ECO:0000305" key="4"/>
<comment type="function">
    <text>The light-harvesting complex (LHC) functions as a light receptor, it captures and delivers excitation energy to photosystems with which it is closely associated.</text>
</comment>
<comment type="cofactor">
    <text evidence="1">Binds at least 14 chlorophylls (8 Chl-a and 6 Chl-b) and carotenoids such as lutein and neoxanthin.</text>
</comment>
<comment type="subunit">
    <text>The LHC complex consists of chlorophyll a-b binding proteins.</text>
</comment>
<comment type="subcellular location">
    <subcellularLocation>
        <location>Plastid</location>
        <location>Chloroplast thylakoid membrane</location>
        <topology>Multi-pass membrane protein</topology>
    </subcellularLocation>
</comment>
<comment type="domain">
    <text>The N-terminus of the protein extends into the stroma where it is involved with adhesion of granal membranes and post-translational modifications; both are believed to mediate the distribution of excitation energy between photosystems I and II.</text>
</comment>
<comment type="PTM">
    <text evidence="1">Photoregulated by reversible phosphorylation of its threonine residues.</text>
</comment>
<comment type="similarity">
    <text evidence="4">Belongs to the light-harvesting chlorophyll a/b-binding (LHC) protein family.</text>
</comment>
<accession>P12327</accession>